<comment type="function">
    <text evidence="1">Methyltransferase required for the conversion of demethylmenaquinol (DMKH2) to menaquinol (MKH2) and the conversion of 2-polyprenyl-6-methoxy-1,4-benzoquinol (DDMQH2) to 2-polyprenyl-3-methyl-6-methoxy-1,4-benzoquinol (DMQH2).</text>
</comment>
<comment type="catalytic activity">
    <reaction evidence="1">
        <text>a 2-demethylmenaquinol + S-adenosyl-L-methionine = a menaquinol + S-adenosyl-L-homocysteine + H(+)</text>
        <dbReference type="Rhea" id="RHEA:42640"/>
        <dbReference type="Rhea" id="RHEA-COMP:9539"/>
        <dbReference type="Rhea" id="RHEA-COMP:9563"/>
        <dbReference type="ChEBI" id="CHEBI:15378"/>
        <dbReference type="ChEBI" id="CHEBI:18151"/>
        <dbReference type="ChEBI" id="CHEBI:55437"/>
        <dbReference type="ChEBI" id="CHEBI:57856"/>
        <dbReference type="ChEBI" id="CHEBI:59789"/>
        <dbReference type="EC" id="2.1.1.163"/>
    </reaction>
</comment>
<comment type="catalytic activity">
    <reaction evidence="1">
        <text>a 2-methoxy-6-(all-trans-polyprenyl)benzene-1,4-diol + S-adenosyl-L-methionine = a 5-methoxy-2-methyl-3-(all-trans-polyprenyl)benzene-1,4-diol + S-adenosyl-L-homocysteine + H(+)</text>
        <dbReference type="Rhea" id="RHEA:28286"/>
        <dbReference type="Rhea" id="RHEA-COMP:10858"/>
        <dbReference type="Rhea" id="RHEA-COMP:10859"/>
        <dbReference type="ChEBI" id="CHEBI:15378"/>
        <dbReference type="ChEBI" id="CHEBI:57856"/>
        <dbReference type="ChEBI" id="CHEBI:59789"/>
        <dbReference type="ChEBI" id="CHEBI:84166"/>
        <dbReference type="ChEBI" id="CHEBI:84167"/>
        <dbReference type="EC" id="2.1.1.201"/>
    </reaction>
</comment>
<comment type="pathway">
    <text evidence="1">Quinol/quinone metabolism; menaquinone biosynthesis; menaquinol from 1,4-dihydroxy-2-naphthoate: step 2/2.</text>
</comment>
<comment type="pathway">
    <text evidence="1">Cofactor biosynthesis; ubiquinone biosynthesis.</text>
</comment>
<comment type="similarity">
    <text evidence="1">Belongs to the class I-like SAM-binding methyltransferase superfamily. MenG/UbiE family.</text>
</comment>
<accession>Q8Y278</accession>
<sequence length="243" mass="27075">MSQTHFGFQQVDEREKAGKVAGVFHSVASKYDVMNDLMSGGMHRLWKMFTIAQAAVRPGYKVLDIAGGTGDLAKAFARQAGPTGEVWLTDINESMLRVGRDRLLDAGVLTPTCLCDAEHIPFPNAYFDVVTVAFGLRNMTHKDRALAEMRRVVKPGGKVMVLEFSKVWQPLEKAYDVYSFKVLPWLGSKVAGDAESYRYLAESIRMHPDQETLKQMMEQAGLDSVEYFNLTAGVVALHVGRRL</sequence>
<evidence type="ECO:0000255" key="1">
    <source>
        <dbReference type="HAMAP-Rule" id="MF_01813"/>
    </source>
</evidence>
<reference key="1">
    <citation type="journal article" date="2002" name="Nature">
        <title>Genome sequence of the plant pathogen Ralstonia solanacearum.</title>
        <authorList>
            <person name="Salanoubat M."/>
            <person name="Genin S."/>
            <person name="Artiguenave F."/>
            <person name="Gouzy J."/>
            <person name="Mangenot S."/>
            <person name="Arlat M."/>
            <person name="Billault A."/>
            <person name="Brottier P."/>
            <person name="Camus J.-C."/>
            <person name="Cattolico L."/>
            <person name="Chandler M."/>
            <person name="Choisne N."/>
            <person name="Claudel-Renard C."/>
            <person name="Cunnac S."/>
            <person name="Demange N."/>
            <person name="Gaspin C."/>
            <person name="Lavie M."/>
            <person name="Moisan A."/>
            <person name="Robert C."/>
            <person name="Saurin W."/>
            <person name="Schiex T."/>
            <person name="Siguier P."/>
            <person name="Thebault P."/>
            <person name="Whalen M."/>
            <person name="Wincker P."/>
            <person name="Levy M."/>
            <person name="Weissenbach J."/>
            <person name="Boucher C.A."/>
        </authorList>
    </citation>
    <scope>NUCLEOTIDE SEQUENCE [LARGE SCALE GENOMIC DNA]</scope>
    <source>
        <strain>ATCC BAA-1114 / GMI1000</strain>
    </source>
</reference>
<organism>
    <name type="scientific">Ralstonia nicotianae (strain ATCC BAA-1114 / GMI1000)</name>
    <name type="common">Ralstonia solanacearum</name>
    <dbReference type="NCBI Taxonomy" id="267608"/>
    <lineage>
        <taxon>Bacteria</taxon>
        <taxon>Pseudomonadati</taxon>
        <taxon>Pseudomonadota</taxon>
        <taxon>Betaproteobacteria</taxon>
        <taxon>Burkholderiales</taxon>
        <taxon>Burkholderiaceae</taxon>
        <taxon>Ralstonia</taxon>
        <taxon>Ralstonia solanacearum species complex</taxon>
    </lineage>
</organism>
<proteinExistence type="inferred from homology"/>
<feature type="chain" id="PRO_0000193314" description="Ubiquinone/menaquinone biosynthesis C-methyltransferase UbiE">
    <location>
        <begin position="1"/>
        <end position="243"/>
    </location>
</feature>
<feature type="binding site" evidence="1">
    <location>
        <position position="69"/>
    </location>
    <ligand>
        <name>S-adenosyl-L-methionine</name>
        <dbReference type="ChEBI" id="CHEBI:59789"/>
    </ligand>
</feature>
<feature type="binding site" evidence="1">
    <location>
        <position position="90"/>
    </location>
    <ligand>
        <name>S-adenosyl-L-methionine</name>
        <dbReference type="ChEBI" id="CHEBI:59789"/>
    </ligand>
</feature>
<feature type="binding site" evidence="1">
    <location>
        <begin position="116"/>
        <end position="117"/>
    </location>
    <ligand>
        <name>S-adenosyl-L-methionine</name>
        <dbReference type="ChEBI" id="CHEBI:59789"/>
    </ligand>
</feature>
<protein>
    <recommendedName>
        <fullName evidence="1">Ubiquinone/menaquinone biosynthesis C-methyltransferase UbiE</fullName>
        <ecNumber evidence="1">2.1.1.163</ecNumber>
        <ecNumber evidence="1">2.1.1.201</ecNumber>
    </recommendedName>
    <alternativeName>
        <fullName evidence="1">2-methoxy-6-polyprenyl-1,4-benzoquinol methylase</fullName>
    </alternativeName>
    <alternativeName>
        <fullName evidence="1">Demethylmenaquinone methyltransferase</fullName>
    </alternativeName>
</protein>
<name>UBIE_RALN1</name>
<keyword id="KW-0474">Menaquinone biosynthesis</keyword>
<keyword id="KW-0489">Methyltransferase</keyword>
<keyword id="KW-1185">Reference proteome</keyword>
<keyword id="KW-0949">S-adenosyl-L-methionine</keyword>
<keyword id="KW-0808">Transferase</keyword>
<keyword id="KW-0831">Ubiquinone biosynthesis</keyword>
<dbReference type="EC" id="2.1.1.163" evidence="1"/>
<dbReference type="EC" id="2.1.1.201" evidence="1"/>
<dbReference type="EMBL" id="AL646052">
    <property type="protein sequence ID" value="CAD13986.1"/>
    <property type="molecule type" value="Genomic_DNA"/>
</dbReference>
<dbReference type="RefSeq" id="WP_011000419.1">
    <property type="nucleotide sequence ID" value="NC_003295.1"/>
</dbReference>
<dbReference type="SMR" id="Q8Y278"/>
<dbReference type="STRING" id="267608.RSc0458"/>
<dbReference type="EnsemblBacteria" id="CAD13986">
    <property type="protein sequence ID" value="CAD13986"/>
    <property type="gene ID" value="RSc0458"/>
</dbReference>
<dbReference type="KEGG" id="rso:RSc0458"/>
<dbReference type="eggNOG" id="COG2226">
    <property type="taxonomic scope" value="Bacteria"/>
</dbReference>
<dbReference type="HOGENOM" id="CLU_037990_0_0_4"/>
<dbReference type="UniPathway" id="UPA00079">
    <property type="reaction ID" value="UER00169"/>
</dbReference>
<dbReference type="UniPathway" id="UPA00232"/>
<dbReference type="Proteomes" id="UP000001436">
    <property type="component" value="Chromosome"/>
</dbReference>
<dbReference type="GO" id="GO:0008425">
    <property type="term" value="F:2-methoxy-6-polyprenyl-1,4-benzoquinol methyltransferase activity"/>
    <property type="evidence" value="ECO:0007669"/>
    <property type="project" value="UniProtKB-UniRule"/>
</dbReference>
<dbReference type="GO" id="GO:0043770">
    <property type="term" value="F:demethylmenaquinone methyltransferase activity"/>
    <property type="evidence" value="ECO:0007669"/>
    <property type="project" value="UniProtKB-UniRule"/>
</dbReference>
<dbReference type="GO" id="GO:0009060">
    <property type="term" value="P:aerobic respiration"/>
    <property type="evidence" value="ECO:0007669"/>
    <property type="project" value="UniProtKB-UniRule"/>
</dbReference>
<dbReference type="GO" id="GO:0009234">
    <property type="term" value="P:menaquinone biosynthetic process"/>
    <property type="evidence" value="ECO:0007669"/>
    <property type="project" value="UniProtKB-UniRule"/>
</dbReference>
<dbReference type="GO" id="GO:0032259">
    <property type="term" value="P:methylation"/>
    <property type="evidence" value="ECO:0007669"/>
    <property type="project" value="UniProtKB-KW"/>
</dbReference>
<dbReference type="CDD" id="cd02440">
    <property type="entry name" value="AdoMet_MTases"/>
    <property type="match status" value="1"/>
</dbReference>
<dbReference type="Gene3D" id="3.40.50.150">
    <property type="entry name" value="Vaccinia Virus protein VP39"/>
    <property type="match status" value="1"/>
</dbReference>
<dbReference type="HAMAP" id="MF_01813">
    <property type="entry name" value="MenG_UbiE_methyltr"/>
    <property type="match status" value="1"/>
</dbReference>
<dbReference type="InterPro" id="IPR029063">
    <property type="entry name" value="SAM-dependent_MTases_sf"/>
</dbReference>
<dbReference type="InterPro" id="IPR004033">
    <property type="entry name" value="UbiE/COQ5_MeTrFase"/>
</dbReference>
<dbReference type="InterPro" id="IPR023576">
    <property type="entry name" value="UbiE/COQ5_MeTrFase_CS"/>
</dbReference>
<dbReference type="NCBIfam" id="TIGR01934">
    <property type="entry name" value="MenG_MenH_UbiE"/>
    <property type="match status" value="1"/>
</dbReference>
<dbReference type="NCBIfam" id="NF001240">
    <property type="entry name" value="PRK00216.1-1"/>
    <property type="match status" value="1"/>
</dbReference>
<dbReference type="PANTHER" id="PTHR43591:SF24">
    <property type="entry name" value="2-METHOXY-6-POLYPRENYL-1,4-BENZOQUINOL METHYLASE, MITOCHONDRIAL"/>
    <property type="match status" value="1"/>
</dbReference>
<dbReference type="PANTHER" id="PTHR43591">
    <property type="entry name" value="METHYLTRANSFERASE"/>
    <property type="match status" value="1"/>
</dbReference>
<dbReference type="Pfam" id="PF01209">
    <property type="entry name" value="Ubie_methyltran"/>
    <property type="match status" value="1"/>
</dbReference>
<dbReference type="SUPFAM" id="SSF53335">
    <property type="entry name" value="S-adenosyl-L-methionine-dependent methyltransferases"/>
    <property type="match status" value="1"/>
</dbReference>
<dbReference type="PROSITE" id="PS51608">
    <property type="entry name" value="SAM_MT_UBIE"/>
    <property type="match status" value="1"/>
</dbReference>
<dbReference type="PROSITE" id="PS01183">
    <property type="entry name" value="UBIE_1"/>
    <property type="match status" value="1"/>
</dbReference>
<dbReference type="PROSITE" id="PS01184">
    <property type="entry name" value="UBIE_2"/>
    <property type="match status" value="1"/>
</dbReference>
<gene>
    <name evidence="1" type="primary">ubiE</name>
    <name type="ordered locus">RSc0458</name>
    <name type="ORF">RS04441</name>
</gene>